<dbReference type="EC" id="5.4.99.20"/>
<dbReference type="EMBL" id="AE004091">
    <property type="protein sequence ID" value="AAG07355.1"/>
    <property type="molecule type" value="Genomic_DNA"/>
</dbReference>
<dbReference type="PIR" id="A83151">
    <property type="entry name" value="A83151"/>
</dbReference>
<dbReference type="RefSeq" id="NP_252657.1">
    <property type="nucleotide sequence ID" value="NC_002516.2"/>
</dbReference>
<dbReference type="RefSeq" id="WP_003114324.1">
    <property type="nucleotide sequence ID" value="NZ_QZGE01000001.1"/>
</dbReference>
<dbReference type="SMR" id="Q9HX48"/>
<dbReference type="FunCoup" id="Q9HX48">
    <property type="interactions" value="100"/>
</dbReference>
<dbReference type="STRING" id="208964.PA3968"/>
<dbReference type="PaxDb" id="208964-PA3968"/>
<dbReference type="GeneID" id="878864"/>
<dbReference type="KEGG" id="pae:PA3968"/>
<dbReference type="PATRIC" id="fig|208964.12.peg.4158"/>
<dbReference type="PseudoCAP" id="PA3968"/>
<dbReference type="HOGENOM" id="CLU_024979_8_1_6"/>
<dbReference type="InParanoid" id="Q9HX48"/>
<dbReference type="OrthoDB" id="9807213at2"/>
<dbReference type="PhylomeDB" id="Q9HX48"/>
<dbReference type="BioCyc" id="PAER208964:G1FZ6-4041-MONOMER"/>
<dbReference type="Proteomes" id="UP000002438">
    <property type="component" value="Chromosome"/>
</dbReference>
<dbReference type="GO" id="GO:0160137">
    <property type="term" value="F:23S rRNA pseudouridine(2457) synthase activity"/>
    <property type="evidence" value="ECO:0007669"/>
    <property type="project" value="UniProtKB-EC"/>
</dbReference>
<dbReference type="GO" id="GO:0003723">
    <property type="term" value="F:RNA binding"/>
    <property type="evidence" value="ECO:0007669"/>
    <property type="project" value="InterPro"/>
</dbReference>
<dbReference type="GO" id="GO:0001522">
    <property type="term" value="P:pseudouridine synthesis"/>
    <property type="evidence" value="ECO:0007669"/>
    <property type="project" value="InterPro"/>
</dbReference>
<dbReference type="GO" id="GO:0006364">
    <property type="term" value="P:rRNA processing"/>
    <property type="evidence" value="ECO:0007669"/>
    <property type="project" value="UniProtKB-KW"/>
</dbReference>
<dbReference type="Gene3D" id="3.30.70.1560">
    <property type="entry name" value="Alpha-L RNA-binding motif"/>
    <property type="match status" value="1"/>
</dbReference>
<dbReference type="Gene3D" id="3.30.70.580">
    <property type="entry name" value="Pseudouridine synthase I, catalytic domain, N-terminal subdomain"/>
    <property type="match status" value="1"/>
</dbReference>
<dbReference type="InterPro" id="IPR042092">
    <property type="entry name" value="PsdUridine_s_RsuA/RluB/E/F_cat"/>
</dbReference>
<dbReference type="InterPro" id="IPR020103">
    <property type="entry name" value="PsdUridine_synth_cat_dom_sf"/>
</dbReference>
<dbReference type="InterPro" id="IPR006145">
    <property type="entry name" value="PsdUridine_synth_RsuA/RluA"/>
</dbReference>
<dbReference type="InterPro" id="IPR000748">
    <property type="entry name" value="PsdUridine_synth_RsuA/RluB/E/F"/>
</dbReference>
<dbReference type="InterPro" id="IPR018496">
    <property type="entry name" value="PsdUridine_synth_RsuA/RluB_CS"/>
</dbReference>
<dbReference type="InterPro" id="IPR050343">
    <property type="entry name" value="RsuA_PseudoU_synthase"/>
</dbReference>
<dbReference type="InterPro" id="IPR020094">
    <property type="entry name" value="TruA/RsuA/RluB/E/F_N"/>
</dbReference>
<dbReference type="NCBIfam" id="TIGR00093">
    <property type="entry name" value="pseudouridine synthase"/>
    <property type="match status" value="1"/>
</dbReference>
<dbReference type="PANTHER" id="PTHR47683">
    <property type="entry name" value="PSEUDOURIDINE SYNTHASE FAMILY PROTEIN-RELATED"/>
    <property type="match status" value="1"/>
</dbReference>
<dbReference type="PANTHER" id="PTHR47683:SF2">
    <property type="entry name" value="RNA-BINDING S4 DOMAIN-CONTAINING PROTEIN"/>
    <property type="match status" value="1"/>
</dbReference>
<dbReference type="Pfam" id="PF00849">
    <property type="entry name" value="PseudoU_synth_2"/>
    <property type="match status" value="1"/>
</dbReference>
<dbReference type="SUPFAM" id="SSF55120">
    <property type="entry name" value="Pseudouridine synthase"/>
    <property type="match status" value="1"/>
</dbReference>
<dbReference type="PROSITE" id="PS01149">
    <property type="entry name" value="PSI_RSU"/>
    <property type="match status" value="1"/>
</dbReference>
<gene>
    <name type="primary">rluE</name>
    <name type="ordered locus">PA3968</name>
</gene>
<sequence>MAKAPPSEPKLLLFNKPFDVLTQFNDEQGRSTLKDFIPVPGVYPAGRLDRDSEGLLLLTNDGRLQARIADPRHKLPKTYWVQVEGTPDEEQLRRLREGVTLNDGPTLPAEARLLDEPTLWERVPPVRFRKSVPTHWLELVIREGRNRQVRRMTAAVGLPTLRLVRVRIGPWSLDGLGLGEWREVPARLD</sequence>
<name>RLUE_PSEAE</name>
<organism>
    <name type="scientific">Pseudomonas aeruginosa (strain ATCC 15692 / DSM 22644 / CIP 104116 / JCM 14847 / LMG 12228 / 1C / PRS 101 / PAO1)</name>
    <dbReference type="NCBI Taxonomy" id="208964"/>
    <lineage>
        <taxon>Bacteria</taxon>
        <taxon>Pseudomonadati</taxon>
        <taxon>Pseudomonadota</taxon>
        <taxon>Gammaproteobacteria</taxon>
        <taxon>Pseudomonadales</taxon>
        <taxon>Pseudomonadaceae</taxon>
        <taxon>Pseudomonas</taxon>
    </lineage>
</organism>
<reference key="1">
    <citation type="journal article" date="2000" name="Nature">
        <title>Complete genome sequence of Pseudomonas aeruginosa PAO1, an opportunistic pathogen.</title>
        <authorList>
            <person name="Stover C.K."/>
            <person name="Pham X.-Q.T."/>
            <person name="Erwin A.L."/>
            <person name="Mizoguchi S.D."/>
            <person name="Warrener P."/>
            <person name="Hickey M.J."/>
            <person name="Brinkman F.S.L."/>
            <person name="Hufnagle W.O."/>
            <person name="Kowalik D.J."/>
            <person name="Lagrou M."/>
            <person name="Garber R.L."/>
            <person name="Goltry L."/>
            <person name="Tolentino E."/>
            <person name="Westbrock-Wadman S."/>
            <person name="Yuan Y."/>
            <person name="Brody L.L."/>
            <person name="Coulter S.N."/>
            <person name="Folger K.R."/>
            <person name="Kas A."/>
            <person name="Larbig K."/>
            <person name="Lim R.M."/>
            <person name="Smith K.A."/>
            <person name="Spencer D.H."/>
            <person name="Wong G.K.-S."/>
            <person name="Wu Z."/>
            <person name="Paulsen I.T."/>
            <person name="Reizer J."/>
            <person name="Saier M.H. Jr."/>
            <person name="Hancock R.E.W."/>
            <person name="Lory S."/>
            <person name="Olson M.V."/>
        </authorList>
    </citation>
    <scope>NUCLEOTIDE SEQUENCE [LARGE SCALE GENOMIC DNA]</scope>
    <source>
        <strain>ATCC 15692 / DSM 22644 / CIP 104116 / JCM 14847 / LMG 12228 / 1C / PRS 101 / PAO1</strain>
    </source>
</reference>
<keyword id="KW-0413">Isomerase</keyword>
<keyword id="KW-1185">Reference proteome</keyword>
<keyword id="KW-0698">rRNA processing</keyword>
<comment type="function">
    <text evidence="1">Responsible for synthesis of pseudouridine from uracil-2457 in 23S ribosomal RNA.</text>
</comment>
<comment type="catalytic activity">
    <reaction>
        <text>uridine(2457) in 23S rRNA = pseudouridine(2457) in 23S rRNA</text>
        <dbReference type="Rhea" id="RHEA:38871"/>
        <dbReference type="Rhea" id="RHEA-COMP:10091"/>
        <dbReference type="Rhea" id="RHEA-COMP:10092"/>
        <dbReference type="ChEBI" id="CHEBI:65314"/>
        <dbReference type="ChEBI" id="CHEBI:65315"/>
        <dbReference type="EC" id="5.4.99.20"/>
    </reaction>
</comment>
<comment type="similarity">
    <text evidence="2">Belongs to the pseudouridine synthase RsuA family.</text>
</comment>
<accession>Q9HX48</accession>
<protein>
    <recommendedName>
        <fullName>Ribosomal large subunit pseudouridine synthase E</fullName>
        <ecNumber>5.4.99.20</ecNumber>
    </recommendedName>
    <alternativeName>
        <fullName>rRNA pseudouridylate synthase E</fullName>
    </alternativeName>
    <alternativeName>
        <fullName>rRNA-uridine isomerase E</fullName>
    </alternativeName>
</protein>
<proteinExistence type="inferred from homology"/>
<evidence type="ECO:0000250" key="1"/>
<evidence type="ECO:0000305" key="2"/>
<feature type="chain" id="PRO_0000100006" description="Ribosomal large subunit pseudouridine synthase E">
    <location>
        <begin position="1"/>
        <end position="189"/>
    </location>
</feature>
<feature type="active site" description="Nucleophile" evidence="1">
    <location>
        <position position="49"/>
    </location>
</feature>